<feature type="initiator methionine" description="Removed" evidence="1">
    <location>
        <position position="1"/>
    </location>
</feature>
<feature type="chain" id="PRO_0000190116" description="Pyridoxine 5'-phosphate synthase">
    <location>
        <begin position="2"/>
        <end position="243"/>
    </location>
</feature>
<feature type="active site" description="Proton acceptor" evidence="2">
    <location>
        <position position="45"/>
    </location>
</feature>
<feature type="active site" description="Proton acceptor" evidence="2">
    <location>
        <position position="72"/>
    </location>
</feature>
<feature type="active site" description="Proton donor" evidence="2">
    <location>
        <position position="193"/>
    </location>
</feature>
<feature type="binding site" evidence="2">
    <location>
        <position position="9"/>
    </location>
    <ligand>
        <name>3-amino-2-oxopropyl phosphate</name>
        <dbReference type="ChEBI" id="CHEBI:57279"/>
    </ligand>
</feature>
<feature type="binding site" evidence="2">
    <location>
        <begin position="11"/>
        <end position="12"/>
    </location>
    <ligand>
        <name>1-deoxy-D-xylulose 5-phosphate</name>
        <dbReference type="ChEBI" id="CHEBI:57792"/>
    </ligand>
</feature>
<feature type="binding site" evidence="2">
    <location>
        <position position="20"/>
    </location>
    <ligand>
        <name>3-amino-2-oxopropyl phosphate</name>
        <dbReference type="ChEBI" id="CHEBI:57279"/>
    </ligand>
</feature>
<feature type="binding site" evidence="2">
    <location>
        <position position="47"/>
    </location>
    <ligand>
        <name>1-deoxy-D-xylulose 5-phosphate</name>
        <dbReference type="ChEBI" id="CHEBI:57792"/>
    </ligand>
</feature>
<feature type="binding site" evidence="2">
    <location>
        <position position="52"/>
    </location>
    <ligand>
        <name>1-deoxy-D-xylulose 5-phosphate</name>
        <dbReference type="ChEBI" id="CHEBI:57792"/>
    </ligand>
</feature>
<feature type="binding site" evidence="2">
    <location>
        <position position="102"/>
    </location>
    <ligand>
        <name>1-deoxy-D-xylulose 5-phosphate</name>
        <dbReference type="ChEBI" id="CHEBI:57792"/>
    </ligand>
</feature>
<feature type="binding site" evidence="2">
    <location>
        <position position="194"/>
    </location>
    <ligand>
        <name>3-amino-2-oxopropyl phosphate</name>
        <dbReference type="ChEBI" id="CHEBI:57279"/>
    </ligand>
</feature>
<feature type="binding site" evidence="2">
    <location>
        <begin position="215"/>
        <end position="216"/>
    </location>
    <ligand>
        <name>3-amino-2-oxopropyl phosphate</name>
        <dbReference type="ChEBI" id="CHEBI:57279"/>
    </ligand>
</feature>
<feature type="site" description="Transition state stabilizer" evidence="2">
    <location>
        <position position="153"/>
    </location>
</feature>
<organism>
    <name type="scientific">Escherichia coli O6:H1 (strain CFT073 / ATCC 700928 / UPEC)</name>
    <dbReference type="NCBI Taxonomy" id="199310"/>
    <lineage>
        <taxon>Bacteria</taxon>
        <taxon>Pseudomonadati</taxon>
        <taxon>Pseudomonadota</taxon>
        <taxon>Gammaproteobacteria</taxon>
        <taxon>Enterobacterales</taxon>
        <taxon>Enterobacteriaceae</taxon>
        <taxon>Escherichia</taxon>
    </lineage>
</organism>
<keyword id="KW-0963">Cytoplasm</keyword>
<keyword id="KW-0664">Pyridoxine biosynthesis</keyword>
<keyword id="KW-1185">Reference proteome</keyword>
<keyword id="KW-0808">Transferase</keyword>
<proteinExistence type="inferred from homology"/>
<gene>
    <name evidence="2" type="primary">pdxJ</name>
    <name type="ordered locus">c3088</name>
</gene>
<comment type="function">
    <text evidence="2">Catalyzes the complicated ring closure reaction between the two acyclic compounds 1-deoxy-D-xylulose-5-phosphate (DXP) and 3-amino-2-oxopropyl phosphate (1-amino-acetone-3-phosphate or AAP) to form pyridoxine 5'-phosphate (PNP) and inorganic phosphate.</text>
</comment>
<comment type="catalytic activity">
    <reaction evidence="2">
        <text>3-amino-2-oxopropyl phosphate + 1-deoxy-D-xylulose 5-phosphate = pyridoxine 5'-phosphate + phosphate + 2 H2O + H(+)</text>
        <dbReference type="Rhea" id="RHEA:15265"/>
        <dbReference type="ChEBI" id="CHEBI:15377"/>
        <dbReference type="ChEBI" id="CHEBI:15378"/>
        <dbReference type="ChEBI" id="CHEBI:43474"/>
        <dbReference type="ChEBI" id="CHEBI:57279"/>
        <dbReference type="ChEBI" id="CHEBI:57792"/>
        <dbReference type="ChEBI" id="CHEBI:58589"/>
        <dbReference type="EC" id="2.6.99.2"/>
    </reaction>
</comment>
<comment type="pathway">
    <text evidence="2">Cofactor biosynthesis; pyridoxine 5'-phosphate biosynthesis; pyridoxine 5'-phosphate from D-erythrose 4-phosphate: step 5/5.</text>
</comment>
<comment type="subunit">
    <text evidence="2">Homooctamer; tetramer of dimers.</text>
</comment>
<comment type="subcellular location">
    <subcellularLocation>
        <location evidence="2">Cytoplasm</location>
    </subcellularLocation>
</comment>
<comment type="similarity">
    <text evidence="2">Belongs to the PNP synthase family.</text>
</comment>
<comment type="sequence caution" evidence="3">
    <conflict type="erroneous initiation">
        <sequence resource="EMBL-CDS" id="AAN81537"/>
    </conflict>
</comment>
<evidence type="ECO:0000250" key="1"/>
<evidence type="ECO:0000255" key="2">
    <source>
        <dbReference type="HAMAP-Rule" id="MF_00279"/>
    </source>
</evidence>
<evidence type="ECO:0000305" key="3"/>
<sequence>MAELLLGVNIDHIATLRNARGTAYPDPVQAAFIAEQAGADGITVHLREDRRHITDRDVCILRQTLDTRMNLEMAVTEEMLAIAVETKPHFCCLVPEKRQEVTTEGGLDVAGQREKMRDACKRLADAGIQVSLFIDADEDQIKAAAEVGAPFIEIHTGCYADAKTDAEQAQELARIAKAATFATSLGLKVNAGHGLTYHNVKAIAAIPEMHELNIGHAIIGRAVMTGLKDAVAEMKRLMLEARG</sequence>
<protein>
    <recommendedName>
        <fullName evidence="2">Pyridoxine 5'-phosphate synthase</fullName>
        <shortName evidence="2">PNP synthase</shortName>
        <ecNumber evidence="2">2.6.99.2</ecNumber>
    </recommendedName>
</protein>
<reference key="1">
    <citation type="journal article" date="2002" name="Proc. Natl. Acad. Sci. U.S.A.">
        <title>Extensive mosaic structure revealed by the complete genome sequence of uropathogenic Escherichia coli.</title>
        <authorList>
            <person name="Welch R.A."/>
            <person name="Burland V."/>
            <person name="Plunkett G. III"/>
            <person name="Redford P."/>
            <person name="Roesch P."/>
            <person name="Rasko D."/>
            <person name="Buckles E.L."/>
            <person name="Liou S.-R."/>
            <person name="Boutin A."/>
            <person name="Hackett J."/>
            <person name="Stroud D."/>
            <person name="Mayhew G.F."/>
            <person name="Rose D.J."/>
            <person name="Zhou S."/>
            <person name="Schwartz D.C."/>
            <person name="Perna N.T."/>
            <person name="Mobley H.L.T."/>
            <person name="Donnenberg M.S."/>
            <person name="Blattner F.R."/>
        </authorList>
    </citation>
    <scope>NUCLEOTIDE SEQUENCE [LARGE SCALE GENOMIC DNA]</scope>
    <source>
        <strain>CFT073 / ATCC 700928 / UPEC</strain>
    </source>
</reference>
<dbReference type="EC" id="2.6.99.2" evidence="2"/>
<dbReference type="EMBL" id="AE014075">
    <property type="protein sequence ID" value="AAN81537.1"/>
    <property type="status" value="ALT_INIT"/>
    <property type="molecule type" value="Genomic_DNA"/>
</dbReference>
<dbReference type="RefSeq" id="WP_001350303.1">
    <property type="nucleotide sequence ID" value="NZ_CP051263.1"/>
</dbReference>
<dbReference type="SMR" id="Q8FF18"/>
<dbReference type="STRING" id="199310.c3088"/>
<dbReference type="KEGG" id="ecc:c3088"/>
<dbReference type="eggNOG" id="COG0854">
    <property type="taxonomic scope" value="Bacteria"/>
</dbReference>
<dbReference type="HOGENOM" id="CLU_074563_0_0_6"/>
<dbReference type="UniPathway" id="UPA00244">
    <property type="reaction ID" value="UER00313"/>
</dbReference>
<dbReference type="Proteomes" id="UP000001410">
    <property type="component" value="Chromosome"/>
</dbReference>
<dbReference type="GO" id="GO:0005829">
    <property type="term" value="C:cytosol"/>
    <property type="evidence" value="ECO:0007669"/>
    <property type="project" value="TreeGrafter"/>
</dbReference>
<dbReference type="GO" id="GO:0033856">
    <property type="term" value="F:pyridoxine 5'-phosphate synthase activity"/>
    <property type="evidence" value="ECO:0007669"/>
    <property type="project" value="UniProtKB-EC"/>
</dbReference>
<dbReference type="GO" id="GO:0008615">
    <property type="term" value="P:pyridoxine biosynthetic process"/>
    <property type="evidence" value="ECO:0007669"/>
    <property type="project" value="UniProtKB-UniRule"/>
</dbReference>
<dbReference type="CDD" id="cd00003">
    <property type="entry name" value="PNPsynthase"/>
    <property type="match status" value="1"/>
</dbReference>
<dbReference type="FunFam" id="3.20.20.70:FF:000042">
    <property type="entry name" value="Pyridoxine 5'-phosphate synthase"/>
    <property type="match status" value="1"/>
</dbReference>
<dbReference type="Gene3D" id="3.20.20.70">
    <property type="entry name" value="Aldolase class I"/>
    <property type="match status" value="1"/>
</dbReference>
<dbReference type="HAMAP" id="MF_00279">
    <property type="entry name" value="PdxJ"/>
    <property type="match status" value="1"/>
</dbReference>
<dbReference type="InterPro" id="IPR013785">
    <property type="entry name" value="Aldolase_TIM"/>
</dbReference>
<dbReference type="InterPro" id="IPR004569">
    <property type="entry name" value="PyrdxlP_synth_PdxJ"/>
</dbReference>
<dbReference type="InterPro" id="IPR036130">
    <property type="entry name" value="Pyridoxine-5'_phos_synth"/>
</dbReference>
<dbReference type="NCBIfam" id="TIGR00559">
    <property type="entry name" value="pdxJ"/>
    <property type="match status" value="1"/>
</dbReference>
<dbReference type="NCBIfam" id="NF003623">
    <property type="entry name" value="PRK05265.1-1"/>
    <property type="match status" value="1"/>
</dbReference>
<dbReference type="NCBIfam" id="NF003624">
    <property type="entry name" value="PRK05265.1-2"/>
    <property type="match status" value="1"/>
</dbReference>
<dbReference type="NCBIfam" id="NF003625">
    <property type="entry name" value="PRK05265.1-3"/>
    <property type="match status" value="1"/>
</dbReference>
<dbReference type="NCBIfam" id="NF003626">
    <property type="entry name" value="PRK05265.1-4"/>
    <property type="match status" value="1"/>
</dbReference>
<dbReference type="NCBIfam" id="NF003627">
    <property type="entry name" value="PRK05265.1-5"/>
    <property type="match status" value="1"/>
</dbReference>
<dbReference type="PANTHER" id="PTHR30456">
    <property type="entry name" value="PYRIDOXINE 5'-PHOSPHATE SYNTHASE"/>
    <property type="match status" value="1"/>
</dbReference>
<dbReference type="PANTHER" id="PTHR30456:SF0">
    <property type="entry name" value="PYRIDOXINE 5'-PHOSPHATE SYNTHASE"/>
    <property type="match status" value="1"/>
</dbReference>
<dbReference type="Pfam" id="PF03740">
    <property type="entry name" value="PdxJ"/>
    <property type="match status" value="1"/>
</dbReference>
<dbReference type="SUPFAM" id="SSF63892">
    <property type="entry name" value="Pyridoxine 5'-phosphate synthase"/>
    <property type="match status" value="1"/>
</dbReference>
<name>PDXJ_ECOL6</name>
<accession>Q8FF18</accession>